<proteinExistence type="inferred from homology"/>
<name>RF3_NITOC</name>
<feature type="chain" id="PRO_0000242193" description="Peptide chain release factor 3">
    <location>
        <begin position="1"/>
        <end position="542"/>
    </location>
</feature>
<feature type="domain" description="tr-type G">
    <location>
        <begin position="11"/>
        <end position="279"/>
    </location>
</feature>
<feature type="binding site" evidence="1">
    <location>
        <begin position="20"/>
        <end position="27"/>
    </location>
    <ligand>
        <name>GTP</name>
        <dbReference type="ChEBI" id="CHEBI:37565"/>
    </ligand>
</feature>
<feature type="binding site" evidence="1">
    <location>
        <begin position="88"/>
        <end position="92"/>
    </location>
    <ligand>
        <name>GTP</name>
        <dbReference type="ChEBI" id="CHEBI:37565"/>
    </ligand>
</feature>
<feature type="binding site" evidence="1">
    <location>
        <begin position="142"/>
        <end position="145"/>
    </location>
    <ligand>
        <name>GTP</name>
        <dbReference type="ChEBI" id="CHEBI:37565"/>
    </ligand>
</feature>
<dbReference type="EMBL" id="CP000127">
    <property type="protein sequence ID" value="ABA58480.1"/>
    <property type="molecule type" value="Genomic_DNA"/>
</dbReference>
<dbReference type="RefSeq" id="WP_002809856.1">
    <property type="nucleotide sequence ID" value="NC_007484.1"/>
</dbReference>
<dbReference type="SMR" id="Q3J9L6"/>
<dbReference type="FunCoup" id="Q3J9L6">
    <property type="interactions" value="245"/>
</dbReference>
<dbReference type="STRING" id="323261.Noc_2019"/>
<dbReference type="KEGG" id="noc:Noc_2019"/>
<dbReference type="eggNOG" id="COG4108">
    <property type="taxonomic scope" value="Bacteria"/>
</dbReference>
<dbReference type="HOGENOM" id="CLU_002794_2_1_6"/>
<dbReference type="InParanoid" id="Q3J9L6"/>
<dbReference type="Proteomes" id="UP000006838">
    <property type="component" value="Chromosome"/>
</dbReference>
<dbReference type="GO" id="GO:0005829">
    <property type="term" value="C:cytosol"/>
    <property type="evidence" value="ECO:0007669"/>
    <property type="project" value="TreeGrafter"/>
</dbReference>
<dbReference type="GO" id="GO:0005525">
    <property type="term" value="F:GTP binding"/>
    <property type="evidence" value="ECO:0007669"/>
    <property type="project" value="UniProtKB-UniRule"/>
</dbReference>
<dbReference type="GO" id="GO:0003924">
    <property type="term" value="F:GTPase activity"/>
    <property type="evidence" value="ECO:0007669"/>
    <property type="project" value="InterPro"/>
</dbReference>
<dbReference type="GO" id="GO:0097216">
    <property type="term" value="F:guanosine tetraphosphate binding"/>
    <property type="evidence" value="ECO:0007669"/>
    <property type="project" value="UniProtKB-ARBA"/>
</dbReference>
<dbReference type="GO" id="GO:0016150">
    <property type="term" value="F:translation release factor activity, codon nonspecific"/>
    <property type="evidence" value="ECO:0007669"/>
    <property type="project" value="TreeGrafter"/>
</dbReference>
<dbReference type="GO" id="GO:0016149">
    <property type="term" value="F:translation release factor activity, codon specific"/>
    <property type="evidence" value="ECO:0007669"/>
    <property type="project" value="UniProtKB-UniRule"/>
</dbReference>
<dbReference type="GO" id="GO:0006449">
    <property type="term" value="P:regulation of translational termination"/>
    <property type="evidence" value="ECO:0007669"/>
    <property type="project" value="UniProtKB-UniRule"/>
</dbReference>
<dbReference type="CDD" id="cd04169">
    <property type="entry name" value="RF3"/>
    <property type="match status" value="1"/>
</dbReference>
<dbReference type="CDD" id="cd03689">
    <property type="entry name" value="RF3_II"/>
    <property type="match status" value="1"/>
</dbReference>
<dbReference type="CDD" id="cd16259">
    <property type="entry name" value="RF3_III"/>
    <property type="match status" value="1"/>
</dbReference>
<dbReference type="FunFam" id="2.40.30.10:FF:000040">
    <property type="entry name" value="Peptide chain release factor 3"/>
    <property type="match status" value="1"/>
</dbReference>
<dbReference type="FunFam" id="3.30.70.3280:FF:000001">
    <property type="entry name" value="Peptide chain release factor 3"/>
    <property type="match status" value="1"/>
</dbReference>
<dbReference type="FunFam" id="3.40.50.300:FF:000542">
    <property type="entry name" value="Peptide chain release factor 3"/>
    <property type="match status" value="1"/>
</dbReference>
<dbReference type="Gene3D" id="3.40.50.300">
    <property type="entry name" value="P-loop containing nucleotide triphosphate hydrolases"/>
    <property type="match status" value="2"/>
</dbReference>
<dbReference type="Gene3D" id="3.30.70.3280">
    <property type="entry name" value="Peptide chain release factor 3, domain III"/>
    <property type="match status" value="1"/>
</dbReference>
<dbReference type="HAMAP" id="MF_00072">
    <property type="entry name" value="Rel_fac_3"/>
    <property type="match status" value="1"/>
</dbReference>
<dbReference type="InterPro" id="IPR053905">
    <property type="entry name" value="EF-G-like_DII"/>
</dbReference>
<dbReference type="InterPro" id="IPR035647">
    <property type="entry name" value="EFG_III/V"/>
</dbReference>
<dbReference type="InterPro" id="IPR031157">
    <property type="entry name" value="G_TR_CS"/>
</dbReference>
<dbReference type="InterPro" id="IPR027417">
    <property type="entry name" value="P-loop_NTPase"/>
</dbReference>
<dbReference type="InterPro" id="IPR004548">
    <property type="entry name" value="PrfC"/>
</dbReference>
<dbReference type="InterPro" id="IPR032090">
    <property type="entry name" value="RF3_C"/>
</dbReference>
<dbReference type="InterPro" id="IPR038467">
    <property type="entry name" value="RF3_dom_3_sf"/>
</dbReference>
<dbReference type="InterPro" id="IPR041732">
    <property type="entry name" value="RF3_GTP-bd"/>
</dbReference>
<dbReference type="InterPro" id="IPR005225">
    <property type="entry name" value="Small_GTP-bd"/>
</dbReference>
<dbReference type="InterPro" id="IPR000795">
    <property type="entry name" value="T_Tr_GTP-bd_dom"/>
</dbReference>
<dbReference type="InterPro" id="IPR009000">
    <property type="entry name" value="Transl_B-barrel_sf"/>
</dbReference>
<dbReference type="NCBIfam" id="TIGR00503">
    <property type="entry name" value="prfC"/>
    <property type="match status" value="1"/>
</dbReference>
<dbReference type="NCBIfam" id="NF001964">
    <property type="entry name" value="PRK00741.1"/>
    <property type="match status" value="1"/>
</dbReference>
<dbReference type="NCBIfam" id="TIGR00231">
    <property type="entry name" value="small_GTP"/>
    <property type="match status" value="1"/>
</dbReference>
<dbReference type="PANTHER" id="PTHR43556">
    <property type="entry name" value="PEPTIDE CHAIN RELEASE FACTOR RF3"/>
    <property type="match status" value="1"/>
</dbReference>
<dbReference type="PANTHER" id="PTHR43556:SF2">
    <property type="entry name" value="PEPTIDE CHAIN RELEASE FACTOR RF3"/>
    <property type="match status" value="1"/>
</dbReference>
<dbReference type="Pfam" id="PF22042">
    <property type="entry name" value="EF-G_D2"/>
    <property type="match status" value="1"/>
</dbReference>
<dbReference type="Pfam" id="PF00009">
    <property type="entry name" value="GTP_EFTU"/>
    <property type="match status" value="1"/>
</dbReference>
<dbReference type="Pfam" id="PF16658">
    <property type="entry name" value="RF3_C"/>
    <property type="match status" value="1"/>
</dbReference>
<dbReference type="PRINTS" id="PR00315">
    <property type="entry name" value="ELONGATNFCT"/>
</dbReference>
<dbReference type="SUPFAM" id="SSF54980">
    <property type="entry name" value="EF-G C-terminal domain-like"/>
    <property type="match status" value="1"/>
</dbReference>
<dbReference type="SUPFAM" id="SSF52540">
    <property type="entry name" value="P-loop containing nucleoside triphosphate hydrolases"/>
    <property type="match status" value="1"/>
</dbReference>
<dbReference type="SUPFAM" id="SSF50447">
    <property type="entry name" value="Translation proteins"/>
    <property type="match status" value="1"/>
</dbReference>
<dbReference type="PROSITE" id="PS00301">
    <property type="entry name" value="G_TR_1"/>
    <property type="match status" value="1"/>
</dbReference>
<dbReference type="PROSITE" id="PS51722">
    <property type="entry name" value="G_TR_2"/>
    <property type="match status" value="1"/>
</dbReference>
<evidence type="ECO:0000255" key="1">
    <source>
        <dbReference type="HAMAP-Rule" id="MF_00072"/>
    </source>
</evidence>
<gene>
    <name evidence="1" type="primary">prfC</name>
    <name type="ordered locus">Noc_2019</name>
</gene>
<organism>
    <name type="scientific">Nitrosococcus oceani (strain ATCC 19707 / BCRC 17464 / JCM 30415 / NCIMB 11848 / C-107)</name>
    <dbReference type="NCBI Taxonomy" id="323261"/>
    <lineage>
        <taxon>Bacteria</taxon>
        <taxon>Pseudomonadati</taxon>
        <taxon>Pseudomonadota</taxon>
        <taxon>Gammaproteobacteria</taxon>
        <taxon>Chromatiales</taxon>
        <taxon>Chromatiaceae</taxon>
        <taxon>Nitrosococcus</taxon>
    </lineage>
</organism>
<reference key="1">
    <citation type="journal article" date="2006" name="Appl. Environ. Microbiol.">
        <title>Complete genome sequence of the marine, chemolithoautotrophic, ammonia-oxidizing bacterium Nitrosococcus oceani ATCC 19707.</title>
        <authorList>
            <person name="Klotz M.G."/>
            <person name="Arp D.J."/>
            <person name="Chain P.S.G."/>
            <person name="El-Sheikh A.F."/>
            <person name="Hauser L.J."/>
            <person name="Hommes N.G."/>
            <person name="Larimer F.W."/>
            <person name="Malfatti S.A."/>
            <person name="Norton J.M."/>
            <person name="Poret-Peterson A.T."/>
            <person name="Vergez L.M."/>
            <person name="Ward B.B."/>
        </authorList>
    </citation>
    <scope>NUCLEOTIDE SEQUENCE [LARGE SCALE GENOMIC DNA]</scope>
    <source>
        <strain>ATCC 19707 / BCRC 17464 / JCM 30415 / NCIMB 11848 / C-107</strain>
    </source>
</reference>
<comment type="function">
    <text evidence="1">Increases the formation of ribosomal termination complexes and stimulates activities of RF-1 and RF-2. It binds guanine nucleotides and has strong preference for UGA stop codons. It may interact directly with the ribosome. The stimulation of RF-1 and RF-2 is significantly reduced by GTP and GDP, but not by GMP.</text>
</comment>
<comment type="subcellular location">
    <subcellularLocation>
        <location evidence="1">Cytoplasm</location>
    </subcellularLocation>
</comment>
<comment type="similarity">
    <text evidence="1">Belongs to the TRAFAC class translation factor GTPase superfamily. Classic translation factor GTPase family. PrfC subfamily.</text>
</comment>
<keyword id="KW-0963">Cytoplasm</keyword>
<keyword id="KW-0342">GTP-binding</keyword>
<keyword id="KW-0547">Nucleotide-binding</keyword>
<keyword id="KW-0648">Protein biosynthesis</keyword>
<keyword id="KW-1185">Reference proteome</keyword>
<sequence>MSPTELIREIEKRRTFAIISHPDAGKTTLTEKLLLFGGAIQLAGTVKSRKASRHATSDWMELEKQRGISVTSSVMQFPYKDRIINLLDTPGHADFSEDTYRTLTAVDSALMVIDSAKGVEERTIKLMEVCRLRNTPILTFINKLDREGQEPIELLDEIERVLGIRCAPLTWPIGMGKRFKGIFHLSHNRIHLFSPTHGGKIKTGEQIQGLDNPRLSELLGNQVEELQEEIALVQGASHPFDKEAFLAGEQTPVFFGSAMNNFGVEELLDAYVEYAPSPRARETATRRVAPKELKFSGFVFKIQANMDPQHRDRIAFLRVCSGSYQKGMKLRHTRLGREVQIANVLTFMAGEREQAETAWPGDIIGFHNHGTIQIGDTFTQGEELQFTGIPHFAPELFRRVRLKDPLRTKALLKGLQQLSEEGATQLFRPLLGNDLILGAVGVLQFDVVAHRLKHEYSVDCGYDSVQVVTARWVSCNDSRRLEEFRTKAAAHLALDGAGNLTYLAPTRVNLDLTMERWPEVAFHAIREHALGVEDGNPLVASL</sequence>
<protein>
    <recommendedName>
        <fullName evidence="1">Peptide chain release factor 3</fullName>
        <shortName evidence="1">RF-3</shortName>
    </recommendedName>
</protein>
<accession>Q3J9L6</accession>